<organism>
    <name type="scientific">Cebuella pygmaea</name>
    <name type="common">Pygmy marmoset</name>
    <name type="synonym">Callithrix pygmaea</name>
    <dbReference type="NCBI Taxonomy" id="9493"/>
    <lineage>
        <taxon>Eukaryota</taxon>
        <taxon>Metazoa</taxon>
        <taxon>Chordata</taxon>
        <taxon>Craniata</taxon>
        <taxon>Vertebrata</taxon>
        <taxon>Euteleostomi</taxon>
        <taxon>Mammalia</taxon>
        <taxon>Eutheria</taxon>
        <taxon>Euarchontoglires</taxon>
        <taxon>Primates</taxon>
        <taxon>Haplorrhini</taxon>
        <taxon>Platyrrhini</taxon>
        <taxon>Cebidae</taxon>
        <taxon>Callitrichinae</taxon>
        <taxon>Cebuella</taxon>
    </lineage>
</organism>
<sequence>MDVTRLVLATLLVFLCFFAAYSHLPPEEKLRDDRSLRSNSSVNLLDLPSVSIVALNKKSKKISRKEAEKRRSSKKEASKQKVARPRTPLSVPCVSTRGSCKPPAPACCHPCASCQCRFFRSACSCRVLNVNC</sequence>
<proteinExistence type="inferred from homology"/>
<name>ASIP_CEBPY</name>
<evidence type="ECO:0000250" key="1"/>
<evidence type="ECO:0000250" key="2">
    <source>
        <dbReference type="UniProtKB" id="P42127"/>
    </source>
</evidence>
<evidence type="ECO:0000250" key="3">
    <source>
        <dbReference type="UniProtKB" id="Q03288"/>
    </source>
</evidence>
<evidence type="ECO:0000255" key="4"/>
<evidence type="ECO:0000255" key="5">
    <source>
        <dbReference type="PROSITE-ProRule" id="PRU00494"/>
    </source>
</evidence>
<evidence type="ECO:0000256" key="6">
    <source>
        <dbReference type="SAM" id="MobiDB-lite"/>
    </source>
</evidence>
<reference key="1">
    <citation type="journal article" date="2006" name="Mamm. Genome">
        <title>Investigation of the role of the agouti signaling protein gene (ASIP) in coat color evolution in primates.</title>
        <authorList>
            <person name="Mundy N.I."/>
            <person name="Kelly J."/>
        </authorList>
    </citation>
    <scope>NUCLEOTIDE SEQUENCE [GENOMIC DNA]</scope>
</reference>
<gene>
    <name type="primary">ASIP</name>
</gene>
<dbReference type="EMBL" id="EF094496">
    <property type="protein sequence ID" value="ABL84294.1"/>
    <property type="molecule type" value="Genomic_DNA"/>
</dbReference>
<dbReference type="GlyCosmos" id="A1YL79">
    <property type="glycosylation" value="1 site, No reported glycans"/>
</dbReference>
<dbReference type="GO" id="GO:0005615">
    <property type="term" value="C:extracellular space"/>
    <property type="evidence" value="ECO:0000250"/>
    <property type="project" value="UniProtKB"/>
</dbReference>
<dbReference type="GO" id="GO:0031779">
    <property type="term" value="F:melanocortin receptor binding"/>
    <property type="evidence" value="ECO:0007669"/>
    <property type="project" value="TreeGrafter"/>
</dbReference>
<dbReference type="GO" id="GO:0005184">
    <property type="term" value="F:neuropeptide hormone activity"/>
    <property type="evidence" value="ECO:0007669"/>
    <property type="project" value="TreeGrafter"/>
</dbReference>
<dbReference type="GO" id="GO:0009755">
    <property type="term" value="P:hormone-mediated signaling pathway"/>
    <property type="evidence" value="ECO:0007669"/>
    <property type="project" value="InterPro"/>
</dbReference>
<dbReference type="GO" id="GO:0042438">
    <property type="term" value="P:melanin biosynthetic process"/>
    <property type="evidence" value="ECO:0000250"/>
    <property type="project" value="UniProtKB"/>
</dbReference>
<dbReference type="GO" id="GO:0032438">
    <property type="term" value="P:melanosome organization"/>
    <property type="evidence" value="ECO:0007669"/>
    <property type="project" value="TreeGrafter"/>
</dbReference>
<dbReference type="FunFam" id="4.10.760.10:FF:000002">
    <property type="entry name" value="Agouti-signaling protein"/>
    <property type="match status" value="1"/>
</dbReference>
<dbReference type="Gene3D" id="4.10.760.10">
    <property type="entry name" value="Agouti domain"/>
    <property type="match status" value="1"/>
</dbReference>
<dbReference type="InterPro" id="IPR007733">
    <property type="entry name" value="Agouti"/>
</dbReference>
<dbReference type="InterPro" id="IPR027300">
    <property type="entry name" value="Agouti_dom"/>
</dbReference>
<dbReference type="InterPro" id="IPR036836">
    <property type="entry name" value="Agouti_dom_sf"/>
</dbReference>
<dbReference type="PANTHER" id="PTHR16551">
    <property type="entry name" value="AGOUTI RELATED"/>
    <property type="match status" value="1"/>
</dbReference>
<dbReference type="PANTHER" id="PTHR16551:SF1">
    <property type="entry name" value="AGOUTI-SIGNALING PROTEIN"/>
    <property type="match status" value="1"/>
</dbReference>
<dbReference type="Pfam" id="PF05039">
    <property type="entry name" value="Agouti"/>
    <property type="match status" value="1"/>
</dbReference>
<dbReference type="SMART" id="SM00792">
    <property type="entry name" value="Agouti"/>
    <property type="match status" value="1"/>
</dbReference>
<dbReference type="SUPFAM" id="SSF57055">
    <property type="entry name" value="Agouti-related protein"/>
    <property type="match status" value="1"/>
</dbReference>
<dbReference type="PROSITE" id="PS60024">
    <property type="entry name" value="AGOUTI_1"/>
    <property type="match status" value="1"/>
</dbReference>
<dbReference type="PROSITE" id="PS51150">
    <property type="entry name" value="AGOUTI_2"/>
    <property type="match status" value="1"/>
</dbReference>
<comment type="function">
    <text evidence="3">Involved in the regulation of melanogenesis. The binding of ASP to MC1R precludes alpha-MSH initiated signaling and thus blocks production of cAMP, leading to a down-regulation of eumelanogenesis (brown/black pigment) and thus increasing synthesis of pheomelanin (yellow/red pigment) (By similarity).</text>
</comment>
<comment type="subcellular location">
    <subcellularLocation>
        <location evidence="2">Secreted</location>
    </subcellularLocation>
</comment>
<comment type="domain">
    <text evidence="1">The presence of a 'disulfide through disulfide knot' structurally defines this protein as a knottin.</text>
</comment>
<feature type="signal peptide" evidence="4">
    <location>
        <begin position="1"/>
        <end position="22"/>
    </location>
</feature>
<feature type="chain" id="PRO_0000285053" description="Agouti-signaling protein">
    <location>
        <begin position="23"/>
        <end position="132"/>
    </location>
</feature>
<feature type="domain" description="Agouti" evidence="5">
    <location>
        <begin position="93"/>
        <end position="132"/>
    </location>
</feature>
<feature type="region of interest" description="Disordered" evidence="6">
    <location>
        <begin position="60"/>
        <end position="93"/>
    </location>
</feature>
<feature type="compositionally biased region" description="Basic and acidic residues" evidence="6">
    <location>
        <begin position="64"/>
        <end position="79"/>
    </location>
</feature>
<feature type="glycosylation site" description="N-linked (GlcNAc...) asparagine" evidence="4">
    <location>
        <position position="39"/>
    </location>
</feature>
<feature type="disulfide bond" evidence="5">
    <location>
        <begin position="93"/>
        <end position="108"/>
    </location>
</feature>
<feature type="disulfide bond" evidence="5">
    <location>
        <begin position="100"/>
        <end position="114"/>
    </location>
</feature>
<feature type="disulfide bond" evidence="5">
    <location>
        <begin position="107"/>
        <end position="125"/>
    </location>
</feature>
<feature type="disulfide bond" evidence="5">
    <location>
        <begin position="111"/>
        <end position="132"/>
    </location>
</feature>
<feature type="disulfide bond" evidence="5">
    <location>
        <begin position="116"/>
        <end position="123"/>
    </location>
</feature>
<accession>A1YL79</accession>
<protein>
    <recommendedName>
        <fullName>Agouti-signaling protein</fullName>
        <shortName>ASP</shortName>
    </recommendedName>
    <alternativeName>
        <fullName>Agouti switch protein</fullName>
    </alternativeName>
</protein>
<keyword id="KW-1015">Disulfide bond</keyword>
<keyword id="KW-0325">Glycoprotein</keyword>
<keyword id="KW-0960">Knottin</keyword>
<keyword id="KW-0964">Secreted</keyword>
<keyword id="KW-0732">Signal</keyword>